<accession>Q7MPS7</accession>
<evidence type="ECO:0000255" key="1">
    <source>
        <dbReference type="PROSITE-ProRule" id="PRU01182"/>
    </source>
</evidence>
<evidence type="ECO:0000256" key="2">
    <source>
        <dbReference type="SAM" id="MobiDB-lite"/>
    </source>
</evidence>
<evidence type="ECO:0000305" key="3"/>
<feature type="chain" id="PRO_0000190753" description="UPF0758 protein VV0285">
    <location>
        <begin position="1"/>
        <end position="224"/>
    </location>
</feature>
<feature type="domain" description="MPN" evidence="1">
    <location>
        <begin position="102"/>
        <end position="224"/>
    </location>
</feature>
<feature type="region of interest" description="Disordered" evidence="2">
    <location>
        <begin position="1"/>
        <end position="20"/>
    </location>
</feature>
<feature type="short sequence motif" description="JAMM motif" evidence="1">
    <location>
        <begin position="173"/>
        <end position="186"/>
    </location>
</feature>
<feature type="binding site" evidence="1">
    <location>
        <position position="173"/>
    </location>
    <ligand>
        <name>Zn(2+)</name>
        <dbReference type="ChEBI" id="CHEBI:29105"/>
        <note>catalytic</note>
    </ligand>
</feature>
<feature type="binding site" evidence="1">
    <location>
        <position position="175"/>
    </location>
    <ligand>
        <name>Zn(2+)</name>
        <dbReference type="ChEBI" id="CHEBI:29105"/>
        <note>catalytic</note>
    </ligand>
</feature>
<feature type="binding site" evidence="1">
    <location>
        <position position="186"/>
    </location>
    <ligand>
        <name>Zn(2+)</name>
        <dbReference type="ChEBI" id="CHEBI:29105"/>
        <note>catalytic</note>
    </ligand>
</feature>
<dbReference type="EMBL" id="BA000037">
    <property type="protein sequence ID" value="BAC93049.1"/>
    <property type="molecule type" value="Genomic_DNA"/>
</dbReference>
<dbReference type="SMR" id="Q7MPS7"/>
<dbReference type="STRING" id="672.VV93_v1c02770"/>
<dbReference type="KEGG" id="vvy:VV0285"/>
<dbReference type="eggNOG" id="COG2003">
    <property type="taxonomic scope" value="Bacteria"/>
</dbReference>
<dbReference type="HOGENOM" id="CLU_073529_0_1_6"/>
<dbReference type="Proteomes" id="UP000002675">
    <property type="component" value="Chromosome I"/>
</dbReference>
<dbReference type="GO" id="GO:0046872">
    <property type="term" value="F:metal ion binding"/>
    <property type="evidence" value="ECO:0007669"/>
    <property type="project" value="UniProtKB-KW"/>
</dbReference>
<dbReference type="GO" id="GO:0008237">
    <property type="term" value="F:metallopeptidase activity"/>
    <property type="evidence" value="ECO:0007669"/>
    <property type="project" value="UniProtKB-KW"/>
</dbReference>
<dbReference type="GO" id="GO:0006508">
    <property type="term" value="P:proteolysis"/>
    <property type="evidence" value="ECO:0007669"/>
    <property type="project" value="UniProtKB-KW"/>
</dbReference>
<dbReference type="CDD" id="cd08071">
    <property type="entry name" value="MPN_DUF2466"/>
    <property type="match status" value="1"/>
</dbReference>
<dbReference type="FunFam" id="3.40.140.10:FF:000032">
    <property type="entry name" value="DNA repair protein RadC"/>
    <property type="match status" value="1"/>
</dbReference>
<dbReference type="Gene3D" id="3.40.140.10">
    <property type="entry name" value="Cytidine Deaminase, domain 2"/>
    <property type="match status" value="1"/>
</dbReference>
<dbReference type="InterPro" id="IPR037518">
    <property type="entry name" value="MPN"/>
</dbReference>
<dbReference type="InterPro" id="IPR025657">
    <property type="entry name" value="RadC_JAB"/>
</dbReference>
<dbReference type="InterPro" id="IPR010994">
    <property type="entry name" value="RuvA_2-like"/>
</dbReference>
<dbReference type="InterPro" id="IPR001405">
    <property type="entry name" value="UPF0758"/>
</dbReference>
<dbReference type="InterPro" id="IPR020891">
    <property type="entry name" value="UPF0758_CS"/>
</dbReference>
<dbReference type="InterPro" id="IPR046778">
    <property type="entry name" value="UPF0758_N"/>
</dbReference>
<dbReference type="NCBIfam" id="NF000642">
    <property type="entry name" value="PRK00024.1"/>
    <property type="match status" value="1"/>
</dbReference>
<dbReference type="NCBIfam" id="TIGR00608">
    <property type="entry name" value="radc"/>
    <property type="match status" value="1"/>
</dbReference>
<dbReference type="PANTHER" id="PTHR30471">
    <property type="entry name" value="DNA REPAIR PROTEIN RADC"/>
    <property type="match status" value="1"/>
</dbReference>
<dbReference type="PANTHER" id="PTHR30471:SF3">
    <property type="entry name" value="UPF0758 PROTEIN YEES-RELATED"/>
    <property type="match status" value="1"/>
</dbReference>
<dbReference type="Pfam" id="PF04002">
    <property type="entry name" value="RadC"/>
    <property type="match status" value="1"/>
</dbReference>
<dbReference type="Pfam" id="PF20582">
    <property type="entry name" value="UPF0758_N"/>
    <property type="match status" value="1"/>
</dbReference>
<dbReference type="SUPFAM" id="SSF102712">
    <property type="entry name" value="JAB1/MPN domain"/>
    <property type="match status" value="1"/>
</dbReference>
<dbReference type="SUPFAM" id="SSF47781">
    <property type="entry name" value="RuvA domain 2-like"/>
    <property type="match status" value="1"/>
</dbReference>
<dbReference type="PROSITE" id="PS50249">
    <property type="entry name" value="MPN"/>
    <property type="match status" value="1"/>
</dbReference>
<dbReference type="PROSITE" id="PS01302">
    <property type="entry name" value="UPF0758"/>
    <property type="match status" value="1"/>
</dbReference>
<keyword id="KW-0378">Hydrolase</keyword>
<keyword id="KW-0479">Metal-binding</keyword>
<keyword id="KW-0482">Metalloprotease</keyword>
<keyword id="KW-0645">Protease</keyword>
<keyword id="KW-0862">Zinc</keyword>
<name>Y285_VIBVY</name>
<protein>
    <recommendedName>
        <fullName>UPF0758 protein VV0285</fullName>
    </recommendedName>
</protein>
<sequence>MSLKNLPSESMPREKLLQRGPQSLSDAELLAIFLRTGTQGMNVIELADFLLRDFGSLRKLFSADEQSFCRHKGLGQAKYVQLQAVLEMTQRYLAETLQRGDALTSPQHTKLYLSSMLRDRHREAFYVLFLDNQNRVIKDEVMFEGTIDAASVYPREVVKRALHYNAAALILAHNHPSGVAEPSQADRRITRRLSDALGLVDIRVLDHFVVGDGEVVSFAERGWI</sequence>
<gene>
    <name type="ordered locus">VV0285</name>
</gene>
<comment type="similarity">
    <text evidence="3">Belongs to the UPF0758 family.</text>
</comment>
<reference key="1">
    <citation type="journal article" date="2003" name="Genome Res.">
        <title>Comparative genome analysis of Vibrio vulnificus, a marine pathogen.</title>
        <authorList>
            <person name="Chen C.-Y."/>
            <person name="Wu K.-M."/>
            <person name="Chang Y.-C."/>
            <person name="Chang C.-H."/>
            <person name="Tsai H.-C."/>
            <person name="Liao T.-L."/>
            <person name="Liu Y.-M."/>
            <person name="Chen H.-J."/>
            <person name="Shen A.B.-T."/>
            <person name="Li J.-C."/>
            <person name="Su T.-L."/>
            <person name="Shao C.-P."/>
            <person name="Lee C.-T."/>
            <person name="Hor L.-I."/>
            <person name="Tsai S.-F."/>
        </authorList>
    </citation>
    <scope>NUCLEOTIDE SEQUENCE [LARGE SCALE GENOMIC DNA]</scope>
    <source>
        <strain>YJ016</strain>
    </source>
</reference>
<organism>
    <name type="scientific">Vibrio vulnificus (strain YJ016)</name>
    <dbReference type="NCBI Taxonomy" id="196600"/>
    <lineage>
        <taxon>Bacteria</taxon>
        <taxon>Pseudomonadati</taxon>
        <taxon>Pseudomonadota</taxon>
        <taxon>Gammaproteobacteria</taxon>
        <taxon>Vibrionales</taxon>
        <taxon>Vibrionaceae</taxon>
        <taxon>Vibrio</taxon>
    </lineage>
</organism>
<proteinExistence type="inferred from homology"/>